<sequence>MAESNSWRSHRESDGNRSIPNGDDARNVRETGVQTDAKVQGQGPRLSKANLFTLLSLWMELFPKREACQQENDAAGVSGLVVVHECRVLGLHCSSAQLHAGQVAVVKHGPRLKSCELYFSRKPCSTCLKMLINAGVSRISYWPGDAELSLLSESLHHGSSSALQEAVLDATAAERLKSNSRPHISVLLQPLDCTVLQFLDETSQNADFLGKIVADNPALDTGDIYRREFWNNSDNFLEKFFISDEERHKYVLNKMGLENFCMEPNFSNLRQHMRNLIRILASVASSVPALLEDYGFFMREPVGMGSPGLPQGVIRHCVIQARLLACRTEDPKVGVGAVIWAEGKQSQCDGTGQLYLVGCGYNAYPVGSQYAEYPQMDHKQEERQNRKYRYILHAEQNALTFRSAEIKAEDNTMMFVTKCPCDECVPLIGCAGIKQIYTTDLDSNKVKHDISYLRFNKLNGVQKFIVSVREK</sequence>
<protein>
    <recommendedName>
        <fullName>Cytidine and dCMP deaminase domain-containing protein 1</fullName>
        <ecNumber evidence="1">3.5.4.5</ecNumber>
    </recommendedName>
    <alternativeName>
        <fullName evidence="5">Cytidine deaminase</fullName>
    </alternativeName>
</protein>
<dbReference type="EC" id="3.5.4.5" evidence="1"/>
<dbReference type="EMBL" id="BC085391">
    <property type="protein sequence ID" value="AAH85391.1"/>
    <property type="molecule type" value="mRNA"/>
</dbReference>
<dbReference type="RefSeq" id="NP_001007449.1">
    <property type="nucleotide sequence ID" value="NM_001007448.1"/>
</dbReference>
<dbReference type="SMR" id="Q5U3U4"/>
<dbReference type="FunCoup" id="Q5U3U4">
    <property type="interactions" value="1054"/>
</dbReference>
<dbReference type="STRING" id="7955.ENSDARP00000053231"/>
<dbReference type="PaxDb" id="7955-ENSDARP00000124195"/>
<dbReference type="GeneID" id="492807"/>
<dbReference type="KEGG" id="dre:492807"/>
<dbReference type="AGR" id="ZFIN:ZDB-GENE-041114-163"/>
<dbReference type="CTD" id="81602"/>
<dbReference type="ZFIN" id="ZDB-GENE-041114-163">
    <property type="gene designation" value="cdadc1"/>
</dbReference>
<dbReference type="eggNOG" id="KOG3127">
    <property type="taxonomic scope" value="Eukaryota"/>
</dbReference>
<dbReference type="InParanoid" id="Q5U3U4"/>
<dbReference type="OrthoDB" id="6710946at2759"/>
<dbReference type="PhylomeDB" id="Q5U3U4"/>
<dbReference type="PRO" id="PR:Q5U3U4"/>
<dbReference type="Proteomes" id="UP000000437">
    <property type="component" value="Chromosome 1"/>
</dbReference>
<dbReference type="GO" id="GO:0005737">
    <property type="term" value="C:cytoplasm"/>
    <property type="evidence" value="ECO:0000318"/>
    <property type="project" value="GO_Central"/>
</dbReference>
<dbReference type="GO" id="GO:0004126">
    <property type="term" value="F:cytidine deaminase activity"/>
    <property type="evidence" value="ECO:0007669"/>
    <property type="project" value="UniProtKB-EC"/>
</dbReference>
<dbReference type="GO" id="GO:0004132">
    <property type="term" value="F:dCMP deaminase activity"/>
    <property type="evidence" value="ECO:0000318"/>
    <property type="project" value="GO_Central"/>
</dbReference>
<dbReference type="GO" id="GO:0008270">
    <property type="term" value="F:zinc ion binding"/>
    <property type="evidence" value="ECO:0007669"/>
    <property type="project" value="InterPro"/>
</dbReference>
<dbReference type="GO" id="GO:0009972">
    <property type="term" value="P:cytidine deamination"/>
    <property type="evidence" value="ECO:0000318"/>
    <property type="project" value="GO_Central"/>
</dbReference>
<dbReference type="FunFam" id="3.40.140.10:FF:000028">
    <property type="entry name" value="Cytidine and dCMP deaminase domain containing 1"/>
    <property type="match status" value="1"/>
</dbReference>
<dbReference type="FunFam" id="3.40.140.10:FF:000030">
    <property type="entry name" value="Cytidine and dCMP deaminase domain-containing protein 1"/>
    <property type="match status" value="1"/>
</dbReference>
<dbReference type="Gene3D" id="3.40.140.10">
    <property type="entry name" value="Cytidine Deaminase, domain 2"/>
    <property type="match status" value="2"/>
</dbReference>
<dbReference type="InterPro" id="IPR016192">
    <property type="entry name" value="APOBEC/CMP_deaminase_Zn-bd"/>
</dbReference>
<dbReference type="InterPro" id="IPR002125">
    <property type="entry name" value="CMP_dCMP_dom"/>
</dbReference>
<dbReference type="InterPro" id="IPR016193">
    <property type="entry name" value="Cytidine_deaminase-like"/>
</dbReference>
<dbReference type="InterPro" id="IPR015517">
    <property type="entry name" value="dCMP_deaminase-rel"/>
</dbReference>
<dbReference type="PANTHER" id="PTHR11086:SF18">
    <property type="entry name" value="DEOXYCYTIDYLATE DEAMINASE"/>
    <property type="match status" value="1"/>
</dbReference>
<dbReference type="PANTHER" id="PTHR11086">
    <property type="entry name" value="DEOXYCYTIDYLATE DEAMINASE-RELATED"/>
    <property type="match status" value="1"/>
</dbReference>
<dbReference type="Pfam" id="PF00383">
    <property type="entry name" value="dCMP_cyt_deam_1"/>
    <property type="match status" value="2"/>
</dbReference>
<dbReference type="SUPFAM" id="SSF53927">
    <property type="entry name" value="Cytidine deaminase-like"/>
    <property type="match status" value="2"/>
</dbReference>
<dbReference type="PROSITE" id="PS00903">
    <property type="entry name" value="CYT_DCMP_DEAMINASES_1"/>
    <property type="match status" value="1"/>
</dbReference>
<dbReference type="PROSITE" id="PS51747">
    <property type="entry name" value="CYT_DCMP_DEAMINASES_2"/>
    <property type="match status" value="2"/>
</dbReference>
<organism>
    <name type="scientific">Danio rerio</name>
    <name type="common">Zebrafish</name>
    <name type="synonym">Brachydanio rerio</name>
    <dbReference type="NCBI Taxonomy" id="7955"/>
    <lineage>
        <taxon>Eukaryota</taxon>
        <taxon>Metazoa</taxon>
        <taxon>Chordata</taxon>
        <taxon>Craniata</taxon>
        <taxon>Vertebrata</taxon>
        <taxon>Euteleostomi</taxon>
        <taxon>Actinopterygii</taxon>
        <taxon>Neopterygii</taxon>
        <taxon>Teleostei</taxon>
        <taxon>Ostariophysi</taxon>
        <taxon>Cypriniformes</taxon>
        <taxon>Danionidae</taxon>
        <taxon>Danioninae</taxon>
        <taxon>Danio</taxon>
    </lineage>
</organism>
<gene>
    <name type="primary">cdadc1</name>
    <name type="ORF">zgc:101622</name>
</gene>
<comment type="function">
    <text evidence="1">Catalyzes the deamination of cytidine and deoxycytidine into uridine and deoxyuridine, respectively.</text>
</comment>
<comment type="catalytic activity">
    <reaction evidence="1">
        <text>2'-deoxycytidine + H2O + H(+) = 2'-deoxyuridine + NH4(+)</text>
        <dbReference type="Rhea" id="RHEA:13433"/>
        <dbReference type="ChEBI" id="CHEBI:15377"/>
        <dbReference type="ChEBI" id="CHEBI:15378"/>
        <dbReference type="ChEBI" id="CHEBI:15698"/>
        <dbReference type="ChEBI" id="CHEBI:16450"/>
        <dbReference type="ChEBI" id="CHEBI:28938"/>
        <dbReference type="EC" id="3.5.4.5"/>
    </reaction>
</comment>
<comment type="catalytic activity">
    <reaction evidence="1">
        <text>cytidine + H2O + H(+) = uridine + NH4(+)</text>
        <dbReference type="Rhea" id="RHEA:16069"/>
        <dbReference type="ChEBI" id="CHEBI:15377"/>
        <dbReference type="ChEBI" id="CHEBI:15378"/>
        <dbReference type="ChEBI" id="CHEBI:16704"/>
        <dbReference type="ChEBI" id="CHEBI:17562"/>
        <dbReference type="ChEBI" id="CHEBI:28938"/>
        <dbReference type="EC" id="3.5.4.5"/>
    </reaction>
</comment>
<comment type="cofactor">
    <cofactor evidence="2">
        <name>Zn(2+)</name>
        <dbReference type="ChEBI" id="CHEBI:29105"/>
    </cofactor>
</comment>
<comment type="similarity">
    <text evidence="5">Belongs to the cytidine and deoxycytidylate deaminase family.</text>
</comment>
<evidence type="ECO:0000250" key="1">
    <source>
        <dbReference type="UniProtKB" id="Q9BWV3"/>
    </source>
</evidence>
<evidence type="ECO:0000250" key="2">
    <source>
        <dbReference type="UniProtKB" id="Q9GZX7"/>
    </source>
</evidence>
<evidence type="ECO:0000255" key="3">
    <source>
        <dbReference type="PROSITE-ProRule" id="PRU01083"/>
    </source>
</evidence>
<evidence type="ECO:0000256" key="4">
    <source>
        <dbReference type="SAM" id="MobiDB-lite"/>
    </source>
</evidence>
<evidence type="ECO:0000305" key="5"/>
<reference key="1">
    <citation type="submission" date="2004-11" db="EMBL/GenBank/DDBJ databases">
        <authorList>
            <consortium name="NIH - Zebrafish Gene Collection (ZGC) project"/>
        </authorList>
    </citation>
    <scope>NUCLEOTIDE SEQUENCE [LARGE SCALE MRNA]</scope>
    <source>
        <tissue>Embryo</tissue>
    </source>
</reference>
<proteinExistence type="evidence at transcript level"/>
<feature type="chain" id="PRO_0000300495" description="Cytidine and dCMP deaminase domain-containing protein 1">
    <location>
        <begin position="1"/>
        <end position="471"/>
    </location>
</feature>
<feature type="domain" description="CMP/dCMP-type deaminase 1" evidence="3">
    <location>
        <begin position="57"/>
        <end position="153"/>
    </location>
</feature>
<feature type="domain" description="CMP/dCMP-type deaminase 2" evidence="3">
    <location>
        <begin position="312"/>
        <end position="460"/>
    </location>
</feature>
<feature type="region of interest" description="Disordered" evidence="4">
    <location>
        <begin position="1"/>
        <end position="27"/>
    </location>
</feature>
<feature type="active site" description="Proton donor" evidence="3">
    <location>
        <position position="395"/>
    </location>
</feature>
<feature type="binding site" evidence="3">
    <location>
        <position position="99"/>
    </location>
    <ligand>
        <name>Zn(2+)</name>
        <dbReference type="ChEBI" id="CHEBI:29105"/>
        <label>1</label>
    </ligand>
</feature>
<feature type="binding site" evidence="3">
    <location>
        <position position="124"/>
    </location>
    <ligand>
        <name>Zn(2+)</name>
        <dbReference type="ChEBI" id="CHEBI:29105"/>
        <label>1</label>
    </ligand>
</feature>
<feature type="binding site" evidence="3">
    <location>
        <position position="127"/>
    </location>
    <ligand>
        <name>Zn(2+)</name>
        <dbReference type="ChEBI" id="CHEBI:29105"/>
        <label>1</label>
    </ligand>
</feature>
<feature type="binding site" evidence="3">
    <location>
        <position position="393"/>
    </location>
    <ligand>
        <name>Zn(2+)</name>
        <dbReference type="ChEBI" id="CHEBI:29105"/>
        <label>2</label>
        <note>catalytic</note>
    </ligand>
</feature>
<feature type="binding site" evidence="3">
    <location>
        <position position="421"/>
    </location>
    <ligand>
        <name>Zn(2+)</name>
        <dbReference type="ChEBI" id="CHEBI:29105"/>
        <label>2</label>
        <note>catalytic</note>
    </ligand>
</feature>
<feature type="binding site" evidence="3">
    <location>
        <position position="424"/>
    </location>
    <ligand>
        <name>Zn(2+)</name>
        <dbReference type="ChEBI" id="CHEBI:29105"/>
        <label>2</label>
        <note>catalytic</note>
    </ligand>
</feature>
<accession>Q5U3U4</accession>
<keyword id="KW-0378">Hydrolase</keyword>
<keyword id="KW-0479">Metal-binding</keyword>
<keyword id="KW-1185">Reference proteome</keyword>
<keyword id="KW-0677">Repeat</keyword>
<keyword id="KW-0862">Zinc</keyword>
<name>CDAC1_DANRE</name>